<feature type="chain" id="PRO_0000111965" description="Probable ATP-dependent 6-phosphofructokinase">
    <location>
        <begin position="1"/>
        <end position="328"/>
    </location>
</feature>
<feature type="active site" description="Proton acceptor" evidence="1">
    <location>
        <position position="132"/>
    </location>
</feature>
<feature type="binding site" evidence="1">
    <location>
        <position position="16"/>
    </location>
    <ligand>
        <name>ATP</name>
        <dbReference type="ChEBI" id="CHEBI:30616"/>
    </ligand>
</feature>
<feature type="binding site" evidence="1">
    <location>
        <begin position="77"/>
        <end position="78"/>
    </location>
    <ligand>
        <name>ATP</name>
        <dbReference type="ChEBI" id="CHEBI:30616"/>
    </ligand>
</feature>
<feature type="binding site" evidence="1">
    <location>
        <begin position="107"/>
        <end position="110"/>
    </location>
    <ligand>
        <name>ATP</name>
        <dbReference type="ChEBI" id="CHEBI:30616"/>
    </ligand>
</feature>
<feature type="binding site" evidence="1">
    <location>
        <position position="108"/>
    </location>
    <ligand>
        <name>Mg(2+)</name>
        <dbReference type="ChEBI" id="CHEBI:18420"/>
        <note>catalytic</note>
    </ligand>
</feature>
<feature type="binding site" description="in other chain" evidence="1">
    <location>
        <begin position="130"/>
        <end position="132"/>
    </location>
    <ligand>
        <name>substrate</name>
        <note>ligand shared between dimeric partners</note>
    </ligand>
</feature>
<feature type="binding site" evidence="1">
    <location>
        <position position="167"/>
    </location>
    <ligand>
        <name>substrate</name>
        <note>ligand shared between dimeric partners</note>
    </ligand>
</feature>
<feature type="binding site" description="in other chain" evidence="1">
    <location>
        <begin position="174"/>
        <end position="176"/>
    </location>
    <ligand>
        <name>substrate</name>
        <note>ligand shared between dimeric partners</note>
    </ligand>
</feature>
<feature type="binding site" description="in other chain" evidence="1">
    <location>
        <position position="226"/>
    </location>
    <ligand>
        <name>substrate</name>
        <note>ligand shared between dimeric partners</note>
    </ligand>
</feature>
<feature type="binding site" description="in other chain" evidence="1">
    <location>
        <begin position="258"/>
        <end position="261"/>
    </location>
    <ligand>
        <name>substrate</name>
        <note>ligand shared between dimeric partners</note>
    </ligand>
</feature>
<reference key="1">
    <citation type="journal article" date="1996" name="Nucleic Acids Res.">
        <title>Complete sequence analysis of the genome of the bacterium Mycoplasma pneumoniae.</title>
        <authorList>
            <person name="Himmelreich R."/>
            <person name="Hilbert H."/>
            <person name="Plagens H."/>
            <person name="Pirkl E."/>
            <person name="Li B.-C."/>
            <person name="Herrmann R."/>
        </authorList>
    </citation>
    <scope>NUCLEOTIDE SEQUENCE [LARGE SCALE GENOMIC DNA]</scope>
    <source>
        <strain>ATCC 29342 / M129 / Subtype 1</strain>
    </source>
</reference>
<keyword id="KW-0067">ATP-binding</keyword>
<keyword id="KW-0963">Cytoplasm</keyword>
<keyword id="KW-0324">Glycolysis</keyword>
<keyword id="KW-0418">Kinase</keyword>
<keyword id="KW-0460">Magnesium</keyword>
<keyword id="KW-0479">Metal-binding</keyword>
<keyword id="KW-0547">Nucleotide-binding</keyword>
<keyword id="KW-1185">Reference proteome</keyword>
<keyword id="KW-0808">Transferase</keyword>
<comment type="function">
    <text evidence="1">Catalyzes the phosphorylation of D-fructose 6-phosphate to fructose 1,6-bisphosphate by ATP, the first committing step of glycolysis.</text>
</comment>
<comment type="catalytic activity">
    <reaction evidence="1">
        <text>beta-D-fructose 6-phosphate + ATP = beta-D-fructose 1,6-bisphosphate + ADP + H(+)</text>
        <dbReference type="Rhea" id="RHEA:16109"/>
        <dbReference type="ChEBI" id="CHEBI:15378"/>
        <dbReference type="ChEBI" id="CHEBI:30616"/>
        <dbReference type="ChEBI" id="CHEBI:32966"/>
        <dbReference type="ChEBI" id="CHEBI:57634"/>
        <dbReference type="ChEBI" id="CHEBI:456216"/>
        <dbReference type="EC" id="2.7.1.11"/>
    </reaction>
</comment>
<comment type="cofactor">
    <cofactor evidence="1">
        <name>Mg(2+)</name>
        <dbReference type="ChEBI" id="CHEBI:18420"/>
    </cofactor>
</comment>
<comment type="pathway">
    <text evidence="1">Carbohydrate degradation; glycolysis; D-glyceraldehyde 3-phosphate and glycerone phosphate from D-glucose: step 3/4.</text>
</comment>
<comment type="subunit">
    <text evidence="1">Homotetramer.</text>
</comment>
<comment type="subcellular location">
    <subcellularLocation>
        <location evidence="1">Cytoplasm</location>
    </subcellularLocation>
</comment>
<comment type="similarity">
    <text evidence="2">Belongs to the phosphofructokinase type A (PFKA) family.</text>
</comment>
<gene>
    <name type="primary">pfkA</name>
    <name type="synonym">pfk</name>
    <name type="ordered locus">MPN_302</name>
    <name type="ORF">MP534</name>
</gene>
<name>PFKA_MYCPN</name>
<dbReference type="EC" id="2.7.1.11"/>
<dbReference type="EMBL" id="U00089">
    <property type="protein sequence ID" value="AAB96182.1"/>
    <property type="molecule type" value="Genomic_DNA"/>
</dbReference>
<dbReference type="PIR" id="S73860">
    <property type="entry name" value="S73860"/>
</dbReference>
<dbReference type="RefSeq" id="NP_109990.1">
    <property type="nucleotide sequence ID" value="NC_000912.1"/>
</dbReference>
<dbReference type="RefSeq" id="WP_010874659.1">
    <property type="nucleotide sequence ID" value="NZ_OU342337.1"/>
</dbReference>
<dbReference type="SMR" id="P75476"/>
<dbReference type="IntAct" id="P75476">
    <property type="interactions" value="2"/>
</dbReference>
<dbReference type="STRING" id="272634.MPN_302"/>
<dbReference type="EnsemblBacteria" id="AAB96182">
    <property type="protein sequence ID" value="AAB96182"/>
    <property type="gene ID" value="MPN_302"/>
</dbReference>
<dbReference type="KEGG" id="mpn:MPN_302"/>
<dbReference type="PATRIC" id="fig|272634.6.peg.326"/>
<dbReference type="HOGENOM" id="CLU_020655_0_1_14"/>
<dbReference type="OrthoDB" id="9802503at2"/>
<dbReference type="BioCyc" id="MetaCyc:MONOMER-545"/>
<dbReference type="BioCyc" id="MPNE272634:G1GJ3-472-MONOMER"/>
<dbReference type="UniPathway" id="UPA00109">
    <property type="reaction ID" value="UER00182"/>
</dbReference>
<dbReference type="Proteomes" id="UP000000808">
    <property type="component" value="Chromosome"/>
</dbReference>
<dbReference type="GO" id="GO:0005945">
    <property type="term" value="C:6-phosphofructokinase complex"/>
    <property type="evidence" value="ECO:0007669"/>
    <property type="project" value="TreeGrafter"/>
</dbReference>
<dbReference type="GO" id="GO:0005829">
    <property type="term" value="C:cytosol"/>
    <property type="evidence" value="ECO:0000314"/>
    <property type="project" value="AgBase"/>
</dbReference>
<dbReference type="GO" id="GO:0003872">
    <property type="term" value="F:6-phosphofructokinase activity"/>
    <property type="evidence" value="ECO:0007669"/>
    <property type="project" value="UniProtKB-EC"/>
</dbReference>
<dbReference type="GO" id="GO:0016208">
    <property type="term" value="F:AMP binding"/>
    <property type="evidence" value="ECO:0007669"/>
    <property type="project" value="TreeGrafter"/>
</dbReference>
<dbReference type="GO" id="GO:0005524">
    <property type="term" value="F:ATP binding"/>
    <property type="evidence" value="ECO:0007669"/>
    <property type="project" value="UniProtKB-KW"/>
</dbReference>
<dbReference type="GO" id="GO:0070095">
    <property type="term" value="F:fructose-6-phosphate binding"/>
    <property type="evidence" value="ECO:0007669"/>
    <property type="project" value="TreeGrafter"/>
</dbReference>
<dbReference type="GO" id="GO:0042802">
    <property type="term" value="F:identical protein binding"/>
    <property type="evidence" value="ECO:0007669"/>
    <property type="project" value="TreeGrafter"/>
</dbReference>
<dbReference type="GO" id="GO:0046872">
    <property type="term" value="F:metal ion binding"/>
    <property type="evidence" value="ECO:0007669"/>
    <property type="project" value="UniProtKB-KW"/>
</dbReference>
<dbReference type="GO" id="GO:0048029">
    <property type="term" value="F:monosaccharide binding"/>
    <property type="evidence" value="ECO:0007669"/>
    <property type="project" value="TreeGrafter"/>
</dbReference>
<dbReference type="GO" id="GO:0061621">
    <property type="term" value="P:canonical glycolysis"/>
    <property type="evidence" value="ECO:0007669"/>
    <property type="project" value="TreeGrafter"/>
</dbReference>
<dbReference type="GO" id="GO:0030388">
    <property type="term" value="P:fructose 1,6-bisphosphate metabolic process"/>
    <property type="evidence" value="ECO:0007669"/>
    <property type="project" value="TreeGrafter"/>
</dbReference>
<dbReference type="GO" id="GO:0006002">
    <property type="term" value="P:fructose 6-phosphate metabolic process"/>
    <property type="evidence" value="ECO:0007669"/>
    <property type="project" value="InterPro"/>
</dbReference>
<dbReference type="FunFam" id="3.40.50.450:FF:000001">
    <property type="entry name" value="ATP-dependent 6-phosphofructokinase"/>
    <property type="match status" value="1"/>
</dbReference>
<dbReference type="FunFam" id="3.40.50.460:FF:000019">
    <property type="entry name" value="Probable ATP-dependent 6-phosphofructokinase"/>
    <property type="match status" value="1"/>
</dbReference>
<dbReference type="Gene3D" id="3.40.50.450">
    <property type="match status" value="1"/>
</dbReference>
<dbReference type="Gene3D" id="3.40.50.460">
    <property type="entry name" value="Phosphofructokinase domain"/>
    <property type="match status" value="1"/>
</dbReference>
<dbReference type="InterPro" id="IPR022953">
    <property type="entry name" value="ATP_PFK"/>
</dbReference>
<dbReference type="InterPro" id="IPR012003">
    <property type="entry name" value="ATP_PFK_prok-type"/>
</dbReference>
<dbReference type="InterPro" id="IPR000023">
    <property type="entry name" value="Phosphofructokinase_dom"/>
</dbReference>
<dbReference type="InterPro" id="IPR035966">
    <property type="entry name" value="PKF_sf"/>
</dbReference>
<dbReference type="NCBIfam" id="NF002872">
    <property type="entry name" value="PRK03202.1"/>
    <property type="match status" value="1"/>
</dbReference>
<dbReference type="PANTHER" id="PTHR13697:SF4">
    <property type="entry name" value="ATP-DEPENDENT 6-PHOSPHOFRUCTOKINASE"/>
    <property type="match status" value="1"/>
</dbReference>
<dbReference type="PANTHER" id="PTHR13697">
    <property type="entry name" value="PHOSPHOFRUCTOKINASE"/>
    <property type="match status" value="1"/>
</dbReference>
<dbReference type="Pfam" id="PF00365">
    <property type="entry name" value="PFK"/>
    <property type="match status" value="1"/>
</dbReference>
<dbReference type="PIRSF" id="PIRSF000532">
    <property type="entry name" value="ATP_PFK_prok"/>
    <property type="match status" value="1"/>
</dbReference>
<dbReference type="PRINTS" id="PR00476">
    <property type="entry name" value="PHFRCTKINASE"/>
</dbReference>
<dbReference type="SUPFAM" id="SSF53784">
    <property type="entry name" value="Phosphofructokinase"/>
    <property type="match status" value="1"/>
</dbReference>
<accession>P75476</accession>
<protein>
    <recommendedName>
        <fullName>Probable ATP-dependent 6-phosphofructokinase</fullName>
        <shortName>ATP-PFK</shortName>
        <shortName>Phosphofructokinase</shortName>
        <ecNumber>2.7.1.11</ecNumber>
    </recommendedName>
    <alternativeName>
        <fullName>Phosphohexokinase</fullName>
    </alternativeName>
</protein>
<evidence type="ECO:0000250" key="1">
    <source>
        <dbReference type="UniProtKB" id="P0A796"/>
    </source>
</evidence>
<evidence type="ECO:0000305" key="2"/>
<proteinExistence type="inferred from homology"/>
<organism>
    <name type="scientific">Mycoplasma pneumoniae (strain ATCC 29342 / M129 / Subtype 1)</name>
    <name type="common">Mycoplasmoides pneumoniae</name>
    <dbReference type="NCBI Taxonomy" id="272634"/>
    <lineage>
        <taxon>Bacteria</taxon>
        <taxon>Bacillati</taxon>
        <taxon>Mycoplasmatota</taxon>
        <taxon>Mycoplasmoidales</taxon>
        <taxon>Mycoplasmoidaceae</taxon>
        <taxon>Mycoplasmoides</taxon>
    </lineage>
</organism>
<sequence>MSPKTTKKIAILTSGGDAPGMNATLVYLTRYATSSEIEVFFVKNGYYGLYHDELVPAHQLDLSNSLFSAGTVIGSKRFVEFKELKVREQAAQNLKKRQIDYLVVIGGDGSYMGAKLLSELGVNCYCLPGTIDNDINSSEFTIGFLTALESIKVNVQAVYHTTKSHERVAIVEVMGRHCGDLAIFGALATNADFVVTPSNKMDLKQLESAVKKILQHQNHCVVIVSENIYGFDGYPSLTAIKQHFDANNMKCNLVSLGHTQRGFAPTSLELVQISLMAQHTINLIGQNKVNQVIGNKANVPVNYDFDQAFNMPPVDRSALIAVINKNII</sequence>